<protein>
    <recommendedName>
        <fullName evidence="1">Large ribosomal subunit protein uL14c</fullName>
    </recommendedName>
    <alternativeName>
        <fullName evidence="2">50S ribosomal protein L14, chloroplastic</fullName>
    </alternativeName>
</protein>
<comment type="function">
    <text evidence="1">Binds to 23S rRNA.</text>
</comment>
<comment type="subunit">
    <text evidence="1">Part of the 50S ribosomal subunit.</text>
</comment>
<comment type="subcellular location">
    <subcellularLocation>
        <location>Plastid</location>
        <location>Chloroplast</location>
    </subcellularLocation>
</comment>
<comment type="similarity">
    <text evidence="1">Belongs to the universal ribosomal protein uL14 family.</text>
</comment>
<accession>P0C440</accession>
<accession>P12137</accession>
<accession>Q6QY49</accession>
<feature type="chain" id="PRO_0000290042" description="Large ribosomal subunit protein uL14c">
    <location>
        <begin position="1"/>
        <end position="123"/>
    </location>
</feature>
<reference key="1">
    <citation type="journal article" date="1989" name="Mol. Gen. Genet.">
        <title>The complete sequence of the rice (Oryza sativa) chloroplast genome: intermolecular recombination between distinct tRNA genes accounts for a major plastid DNA inversion during the evolution of the cereals.</title>
        <authorList>
            <person name="Hiratsuka J."/>
            <person name="Shimada H."/>
            <person name="Whittier R."/>
            <person name="Ishibashi T."/>
            <person name="Sakamoto M."/>
            <person name="Mori M."/>
            <person name="Kondo C."/>
            <person name="Honji Y."/>
            <person name="Sun C.-R."/>
            <person name="Meng B.-Y."/>
            <person name="Li Y.-Q."/>
            <person name="Kanno A."/>
            <person name="Nishizawa Y."/>
            <person name="Hirai A."/>
            <person name="Shinozaki K."/>
            <person name="Sugiura M."/>
        </authorList>
    </citation>
    <scope>NUCLEOTIDE SEQUENCE [LARGE SCALE GENOMIC DNA]</scope>
    <source>
        <strain>cv. Nipponbare</strain>
    </source>
</reference>
<reference key="2">
    <citation type="journal article" date="2004" name="Plant Physiol.">
        <title>A comparison of rice chloroplast genomes.</title>
        <authorList>
            <person name="Tang J."/>
            <person name="Xia H."/>
            <person name="Cao M."/>
            <person name="Zhang X."/>
            <person name="Zeng W."/>
            <person name="Hu S."/>
            <person name="Tong W."/>
            <person name="Wang J."/>
            <person name="Wang J."/>
            <person name="Yu J."/>
            <person name="Yang H."/>
            <person name="Zhu L."/>
        </authorList>
    </citation>
    <scope>NUCLEOTIDE SEQUENCE [LARGE SCALE GENOMIC DNA]</scope>
    <source>
        <strain>cv. Nipponbare</strain>
    </source>
</reference>
<name>RK14_ORYSJ</name>
<sequence length="123" mass="13565">MIQPQTLLNVADNSGARKLMCIRVIGAASNQRYARIGDVIVAVIKDAVPQMPLERSEVIRAVIVRTCKEFKCEDGIIIRYDDNAAVIIDQKGNPKGTRVFGAIAEELRELNFTKIVSLAPEVL</sequence>
<keyword id="KW-0150">Chloroplast</keyword>
<keyword id="KW-0934">Plastid</keyword>
<keyword id="KW-1185">Reference proteome</keyword>
<keyword id="KW-0687">Ribonucleoprotein</keyword>
<keyword id="KW-0689">Ribosomal protein</keyword>
<keyword id="KW-0694">RNA-binding</keyword>
<keyword id="KW-0699">rRNA-binding</keyword>
<gene>
    <name evidence="1" type="primary">rpl14</name>
    <name type="ordered locus">LOC_Osp1g00710</name>
</gene>
<evidence type="ECO:0000255" key="1">
    <source>
        <dbReference type="HAMAP-Rule" id="MF_01367"/>
    </source>
</evidence>
<evidence type="ECO:0000305" key="2"/>
<proteinExistence type="inferred from homology"/>
<dbReference type="EMBL" id="X15901">
    <property type="protein sequence ID" value="CAA33932.1"/>
    <property type="molecule type" value="Genomic_DNA"/>
</dbReference>
<dbReference type="EMBL" id="AY522330">
    <property type="status" value="NOT_ANNOTATED_CDS"/>
    <property type="molecule type" value="Genomic_DNA"/>
</dbReference>
<dbReference type="PIR" id="JQ0263">
    <property type="entry name" value="R5RZ14"/>
</dbReference>
<dbReference type="RefSeq" id="NP_039422.1">
    <property type="nucleotide sequence ID" value="NC_001320.1"/>
</dbReference>
<dbReference type="SMR" id="P0C440"/>
<dbReference type="FunCoup" id="P0C440">
    <property type="interactions" value="340"/>
</dbReference>
<dbReference type="STRING" id="39947.P0C440"/>
<dbReference type="PaxDb" id="39947-P0C440"/>
<dbReference type="EnsemblPlants" id="transcript-rpl14">
    <property type="protein sequence ID" value="cds-CAA33932.1"/>
    <property type="gene ID" value="gene-rpl14"/>
</dbReference>
<dbReference type="GeneID" id="3131422"/>
<dbReference type="Gramene" id="transcript-rpl14">
    <property type="protein sequence ID" value="cds-CAA33932.1"/>
    <property type="gene ID" value="gene-rpl14"/>
</dbReference>
<dbReference type="KEGG" id="dosa:rpl14"/>
<dbReference type="KEGG" id="osa:3131422"/>
<dbReference type="InParanoid" id="P0C440"/>
<dbReference type="OrthoDB" id="733561at2759"/>
<dbReference type="Proteomes" id="UP000059680">
    <property type="component" value="Chloroplast"/>
</dbReference>
<dbReference type="GO" id="GO:0009507">
    <property type="term" value="C:chloroplast"/>
    <property type="evidence" value="ECO:0007669"/>
    <property type="project" value="UniProtKB-SubCell"/>
</dbReference>
<dbReference type="GO" id="GO:0022625">
    <property type="term" value="C:cytosolic large ribosomal subunit"/>
    <property type="evidence" value="ECO:0000318"/>
    <property type="project" value="GO_Central"/>
</dbReference>
<dbReference type="GO" id="GO:0009536">
    <property type="term" value="C:plastid"/>
    <property type="evidence" value="ECO:0000305"/>
    <property type="project" value="Gramene"/>
</dbReference>
<dbReference type="GO" id="GO:0070180">
    <property type="term" value="F:large ribosomal subunit rRNA binding"/>
    <property type="evidence" value="ECO:0000318"/>
    <property type="project" value="GO_Central"/>
</dbReference>
<dbReference type="GO" id="GO:0003735">
    <property type="term" value="F:structural constituent of ribosome"/>
    <property type="evidence" value="ECO:0000318"/>
    <property type="project" value="GO_Central"/>
</dbReference>
<dbReference type="GO" id="GO:0006412">
    <property type="term" value="P:translation"/>
    <property type="evidence" value="ECO:0007669"/>
    <property type="project" value="UniProtKB-UniRule"/>
</dbReference>
<dbReference type="CDD" id="cd00337">
    <property type="entry name" value="Ribosomal_uL14"/>
    <property type="match status" value="1"/>
</dbReference>
<dbReference type="FunFam" id="2.40.150.20:FF:000002">
    <property type="entry name" value="50S ribosomal protein L14, chloroplastic"/>
    <property type="match status" value="1"/>
</dbReference>
<dbReference type="Gene3D" id="2.40.150.20">
    <property type="entry name" value="Ribosomal protein L14"/>
    <property type="match status" value="1"/>
</dbReference>
<dbReference type="HAMAP" id="MF_01367">
    <property type="entry name" value="Ribosomal_uL14"/>
    <property type="match status" value="1"/>
</dbReference>
<dbReference type="InterPro" id="IPR000218">
    <property type="entry name" value="Ribosomal_uL14"/>
</dbReference>
<dbReference type="InterPro" id="IPR005745">
    <property type="entry name" value="Ribosomal_uL14_bac-type"/>
</dbReference>
<dbReference type="InterPro" id="IPR019972">
    <property type="entry name" value="Ribosomal_uL14_CS"/>
</dbReference>
<dbReference type="InterPro" id="IPR036853">
    <property type="entry name" value="Ribosomal_uL14_sf"/>
</dbReference>
<dbReference type="NCBIfam" id="TIGR01067">
    <property type="entry name" value="rplN_bact"/>
    <property type="match status" value="1"/>
</dbReference>
<dbReference type="PANTHER" id="PTHR11761">
    <property type="entry name" value="50S/60S RIBOSOMAL PROTEIN L14/L23"/>
    <property type="match status" value="1"/>
</dbReference>
<dbReference type="PANTHER" id="PTHR11761:SF3">
    <property type="entry name" value="LARGE RIBOSOMAL SUBUNIT PROTEIN UL14M"/>
    <property type="match status" value="1"/>
</dbReference>
<dbReference type="Pfam" id="PF00238">
    <property type="entry name" value="Ribosomal_L14"/>
    <property type="match status" value="1"/>
</dbReference>
<dbReference type="SMART" id="SM01374">
    <property type="entry name" value="Ribosomal_L14"/>
    <property type="match status" value="1"/>
</dbReference>
<dbReference type="SUPFAM" id="SSF50193">
    <property type="entry name" value="Ribosomal protein L14"/>
    <property type="match status" value="1"/>
</dbReference>
<dbReference type="PROSITE" id="PS00049">
    <property type="entry name" value="RIBOSOMAL_L14"/>
    <property type="match status" value="1"/>
</dbReference>
<geneLocation type="chloroplast"/>
<organism>
    <name type="scientific">Oryza sativa subsp. japonica</name>
    <name type="common">Rice</name>
    <dbReference type="NCBI Taxonomy" id="39947"/>
    <lineage>
        <taxon>Eukaryota</taxon>
        <taxon>Viridiplantae</taxon>
        <taxon>Streptophyta</taxon>
        <taxon>Embryophyta</taxon>
        <taxon>Tracheophyta</taxon>
        <taxon>Spermatophyta</taxon>
        <taxon>Magnoliopsida</taxon>
        <taxon>Liliopsida</taxon>
        <taxon>Poales</taxon>
        <taxon>Poaceae</taxon>
        <taxon>BOP clade</taxon>
        <taxon>Oryzoideae</taxon>
        <taxon>Oryzeae</taxon>
        <taxon>Oryzinae</taxon>
        <taxon>Oryza</taxon>
        <taxon>Oryza sativa</taxon>
    </lineage>
</organism>